<sequence>MTQMTVQVVTPDGIKYDHHAKCISVTTPDGEMGILPNHINLIAPLQVHEMKIRRGGEDEKVDWIAINGGIIEIKDNVVTVVADSAERDRDIDVSRAERAKLRAEREIAQAETTHNIDEVRRAKVALRRALNRINVSKK</sequence>
<comment type="function">
    <text evidence="1">Produces ATP from ADP in the presence of a proton gradient across the membrane.</text>
</comment>
<comment type="subunit">
    <text evidence="1">F-type ATPases have 2 components, CF(1) - the catalytic core - and CF(0) - the membrane proton channel. CF(1) has five subunits: alpha(3), beta(3), gamma(1), delta(1), epsilon(1). CF(0) has three main subunits: a, b and c.</text>
</comment>
<comment type="subcellular location">
    <subcellularLocation>
        <location evidence="1">Cell membrane</location>
        <topology evidence="1">Peripheral membrane protein</topology>
    </subcellularLocation>
</comment>
<comment type="similarity">
    <text evidence="1">Belongs to the ATPase epsilon chain family.</text>
</comment>
<accession>P0CZ97</accession>
<accession>P63669</accession>
<accession>Q8P1K4</accession>
<proteinExistence type="inferred from homology"/>
<protein>
    <recommendedName>
        <fullName evidence="1">ATP synthase epsilon chain</fullName>
    </recommendedName>
    <alternativeName>
        <fullName evidence="1">ATP synthase F1 sector epsilon subunit</fullName>
    </alternativeName>
    <alternativeName>
        <fullName evidence="1">F-ATPase epsilon subunit</fullName>
    </alternativeName>
</protein>
<feature type="chain" id="PRO_0000411290" description="ATP synthase epsilon chain">
    <location>
        <begin position="1"/>
        <end position="138"/>
    </location>
</feature>
<organism>
    <name type="scientific">Streptococcus pyogenes serotype M3 (strain SSI-1)</name>
    <dbReference type="NCBI Taxonomy" id="193567"/>
    <lineage>
        <taxon>Bacteria</taxon>
        <taxon>Bacillati</taxon>
        <taxon>Bacillota</taxon>
        <taxon>Bacilli</taxon>
        <taxon>Lactobacillales</taxon>
        <taxon>Streptococcaceae</taxon>
        <taxon>Streptococcus</taxon>
    </lineage>
</organism>
<name>ATPE_STRPQ</name>
<keyword id="KW-0066">ATP synthesis</keyword>
<keyword id="KW-1003">Cell membrane</keyword>
<keyword id="KW-0139">CF(1)</keyword>
<keyword id="KW-0375">Hydrogen ion transport</keyword>
<keyword id="KW-0406">Ion transport</keyword>
<keyword id="KW-0472">Membrane</keyword>
<keyword id="KW-0813">Transport</keyword>
<evidence type="ECO:0000255" key="1">
    <source>
        <dbReference type="HAMAP-Rule" id="MF_00530"/>
    </source>
</evidence>
<reference key="1">
    <citation type="journal article" date="2003" name="Genome Res.">
        <title>Genome sequence of an M3 strain of Streptococcus pyogenes reveals a large-scale genomic rearrangement in invasive strains and new insights into phage evolution.</title>
        <authorList>
            <person name="Nakagawa I."/>
            <person name="Kurokawa K."/>
            <person name="Yamashita A."/>
            <person name="Nakata M."/>
            <person name="Tomiyasu Y."/>
            <person name="Okahashi N."/>
            <person name="Kawabata S."/>
            <person name="Yamazaki K."/>
            <person name="Shiba T."/>
            <person name="Yasunaga T."/>
            <person name="Hayashi H."/>
            <person name="Hattori M."/>
            <person name="Hamada S."/>
        </authorList>
    </citation>
    <scope>NUCLEOTIDE SEQUENCE [LARGE SCALE GENOMIC DNA]</scope>
    <source>
        <strain>SSI-1</strain>
    </source>
</reference>
<gene>
    <name evidence="1" type="primary">atpC</name>
    <name type="synonym">atpE</name>
    <name type="ordered locus">SPs1354</name>
</gene>
<dbReference type="EMBL" id="BA000034">
    <property type="protein sequence ID" value="BAC64449.1"/>
    <property type="molecule type" value="Genomic_DNA"/>
</dbReference>
<dbReference type="RefSeq" id="WP_002985233.1">
    <property type="nucleotide sequence ID" value="NC_004606.1"/>
</dbReference>
<dbReference type="SMR" id="P0CZ97"/>
<dbReference type="KEGG" id="sps:SPs1354"/>
<dbReference type="HOGENOM" id="CLU_084338_1_0_9"/>
<dbReference type="GO" id="GO:0005886">
    <property type="term" value="C:plasma membrane"/>
    <property type="evidence" value="ECO:0007669"/>
    <property type="project" value="UniProtKB-SubCell"/>
</dbReference>
<dbReference type="GO" id="GO:0045259">
    <property type="term" value="C:proton-transporting ATP synthase complex"/>
    <property type="evidence" value="ECO:0007669"/>
    <property type="project" value="UniProtKB-KW"/>
</dbReference>
<dbReference type="GO" id="GO:0005524">
    <property type="term" value="F:ATP binding"/>
    <property type="evidence" value="ECO:0007669"/>
    <property type="project" value="UniProtKB-UniRule"/>
</dbReference>
<dbReference type="GO" id="GO:0046933">
    <property type="term" value="F:proton-transporting ATP synthase activity, rotational mechanism"/>
    <property type="evidence" value="ECO:0007669"/>
    <property type="project" value="UniProtKB-UniRule"/>
</dbReference>
<dbReference type="CDD" id="cd12152">
    <property type="entry name" value="F1-ATPase_delta"/>
    <property type="match status" value="1"/>
</dbReference>
<dbReference type="Gene3D" id="1.20.5.440">
    <property type="entry name" value="ATP synthase delta/epsilon subunit, C-terminal domain"/>
    <property type="match status" value="1"/>
</dbReference>
<dbReference type="Gene3D" id="2.60.15.10">
    <property type="entry name" value="F0F1 ATP synthase delta/epsilon subunit, N-terminal"/>
    <property type="match status" value="1"/>
</dbReference>
<dbReference type="HAMAP" id="MF_00530">
    <property type="entry name" value="ATP_synth_epsil_bac"/>
    <property type="match status" value="1"/>
</dbReference>
<dbReference type="InterPro" id="IPR001469">
    <property type="entry name" value="ATP_synth_F1_dsu/esu"/>
</dbReference>
<dbReference type="InterPro" id="IPR020546">
    <property type="entry name" value="ATP_synth_F1_dsu/esu_N"/>
</dbReference>
<dbReference type="InterPro" id="IPR020547">
    <property type="entry name" value="ATP_synth_F1_esu_C"/>
</dbReference>
<dbReference type="InterPro" id="IPR036771">
    <property type="entry name" value="ATPsynth_dsu/esu_N"/>
</dbReference>
<dbReference type="NCBIfam" id="TIGR01216">
    <property type="entry name" value="ATP_synt_epsi"/>
    <property type="match status" value="1"/>
</dbReference>
<dbReference type="NCBIfam" id="NF001846">
    <property type="entry name" value="PRK00571.1-3"/>
    <property type="match status" value="1"/>
</dbReference>
<dbReference type="PANTHER" id="PTHR13822">
    <property type="entry name" value="ATP SYNTHASE DELTA/EPSILON CHAIN"/>
    <property type="match status" value="1"/>
</dbReference>
<dbReference type="PANTHER" id="PTHR13822:SF10">
    <property type="entry name" value="ATP SYNTHASE EPSILON CHAIN, CHLOROPLASTIC"/>
    <property type="match status" value="1"/>
</dbReference>
<dbReference type="Pfam" id="PF00401">
    <property type="entry name" value="ATP-synt_DE"/>
    <property type="match status" value="1"/>
</dbReference>
<dbReference type="Pfam" id="PF02823">
    <property type="entry name" value="ATP-synt_DE_N"/>
    <property type="match status" value="1"/>
</dbReference>
<dbReference type="SUPFAM" id="SSF51344">
    <property type="entry name" value="Epsilon subunit of F1F0-ATP synthase N-terminal domain"/>
    <property type="match status" value="1"/>
</dbReference>